<dbReference type="EC" id="2.7.1.89" evidence="1"/>
<dbReference type="EMBL" id="CP000247">
    <property type="protein sequence ID" value="ABG69111.1"/>
    <property type="molecule type" value="Genomic_DNA"/>
</dbReference>
<dbReference type="RefSeq" id="WP_001116595.1">
    <property type="nucleotide sequence ID" value="NC_008253.1"/>
</dbReference>
<dbReference type="SMR" id="Q0TIW8"/>
<dbReference type="KEGG" id="ecp:ECP_1098"/>
<dbReference type="HOGENOM" id="CLU_055115_2_1_6"/>
<dbReference type="UniPathway" id="UPA00060">
    <property type="reaction ID" value="UER00596"/>
</dbReference>
<dbReference type="Proteomes" id="UP000009182">
    <property type="component" value="Chromosome"/>
</dbReference>
<dbReference type="GO" id="GO:0005524">
    <property type="term" value="F:ATP binding"/>
    <property type="evidence" value="ECO:0007669"/>
    <property type="project" value="UniProtKB-KW"/>
</dbReference>
<dbReference type="GO" id="GO:0019165">
    <property type="term" value="F:thiamine kinase activity"/>
    <property type="evidence" value="ECO:0007669"/>
    <property type="project" value="UniProtKB-UniRule"/>
</dbReference>
<dbReference type="GO" id="GO:0009229">
    <property type="term" value="P:thiamine diphosphate biosynthetic process"/>
    <property type="evidence" value="ECO:0007669"/>
    <property type="project" value="UniProtKB-UniRule"/>
</dbReference>
<dbReference type="GO" id="GO:0006772">
    <property type="term" value="P:thiamine metabolic process"/>
    <property type="evidence" value="ECO:0007669"/>
    <property type="project" value="InterPro"/>
</dbReference>
<dbReference type="FunFam" id="3.90.1200.10:FF:000004">
    <property type="entry name" value="Thiamine kinase"/>
    <property type="match status" value="1"/>
</dbReference>
<dbReference type="Gene3D" id="3.90.1200.10">
    <property type="match status" value="1"/>
</dbReference>
<dbReference type="HAMAP" id="MF_01604">
    <property type="entry name" value="Thiamine_kinase"/>
    <property type="match status" value="1"/>
</dbReference>
<dbReference type="InterPro" id="IPR002575">
    <property type="entry name" value="Aminoglycoside_PTrfase"/>
</dbReference>
<dbReference type="InterPro" id="IPR011009">
    <property type="entry name" value="Kinase-like_dom_sf"/>
</dbReference>
<dbReference type="InterPro" id="IPR014093">
    <property type="entry name" value="Thiamine_kinase"/>
</dbReference>
<dbReference type="NCBIfam" id="NF007620">
    <property type="entry name" value="PRK10271.1"/>
    <property type="match status" value="1"/>
</dbReference>
<dbReference type="NCBIfam" id="TIGR02721">
    <property type="entry name" value="ycfN_thiK"/>
    <property type="match status" value="1"/>
</dbReference>
<dbReference type="Pfam" id="PF01636">
    <property type="entry name" value="APH"/>
    <property type="match status" value="1"/>
</dbReference>
<dbReference type="SUPFAM" id="SSF56112">
    <property type="entry name" value="Protein kinase-like (PK-like)"/>
    <property type="match status" value="1"/>
</dbReference>
<protein>
    <recommendedName>
        <fullName evidence="1">Thiamine kinase</fullName>
        <ecNumber evidence="1">2.7.1.89</ecNumber>
    </recommendedName>
</protein>
<evidence type="ECO:0000255" key="1">
    <source>
        <dbReference type="HAMAP-Rule" id="MF_01604"/>
    </source>
</evidence>
<feature type="chain" id="PRO_0000290997" description="Thiamine kinase">
    <location>
        <begin position="1"/>
        <end position="274"/>
    </location>
</feature>
<organism>
    <name type="scientific">Escherichia coli O6:K15:H31 (strain 536 / UPEC)</name>
    <dbReference type="NCBI Taxonomy" id="362663"/>
    <lineage>
        <taxon>Bacteria</taxon>
        <taxon>Pseudomonadati</taxon>
        <taxon>Pseudomonadota</taxon>
        <taxon>Gammaproteobacteria</taxon>
        <taxon>Enterobacterales</taxon>
        <taxon>Enterobacteriaceae</taxon>
        <taxon>Escherichia</taxon>
    </lineage>
</organism>
<name>THIK_ECOL5</name>
<sequence>MPFRSNNPLTRDEFLSRFFPQFHPVTTFNRGLSGGSFLIEHQGQRFVVRQPHDPDAPQSAFLRQYRALSQLPACIAPKPHLYLRDWMVVDYLPGEVKTYLPDTNELAGLLYYLHQQPRFGWRITLLPLLELYWQQSDPARRTVGWLRMLKRLRKAREPRLLRLSPLHMDVHAGNLVHSASGLKLIDWEYAGDGDIALELAAVWVENTDQHRQLVNDYATRAKIYPAQLWRQVRRWFPWLLMLKAGWFEYRWRQTGDQQFIRLADDTWRQLLIKQ</sequence>
<reference key="1">
    <citation type="journal article" date="2006" name="Mol. Microbiol.">
        <title>Role of pathogenicity island-associated integrases in the genome plasticity of uropathogenic Escherichia coli strain 536.</title>
        <authorList>
            <person name="Hochhut B."/>
            <person name="Wilde C."/>
            <person name="Balling G."/>
            <person name="Middendorf B."/>
            <person name="Dobrindt U."/>
            <person name="Brzuszkiewicz E."/>
            <person name="Gottschalk G."/>
            <person name="Carniel E."/>
            <person name="Hacker J."/>
        </authorList>
    </citation>
    <scope>NUCLEOTIDE SEQUENCE [LARGE SCALE GENOMIC DNA]</scope>
    <source>
        <strain>536 / UPEC</strain>
    </source>
</reference>
<proteinExistence type="inferred from homology"/>
<comment type="function">
    <text evidence="1">Catalyzes the ATP-dependent phosphorylation of thiamine to thiamine phosphate. Is involved in thiamine salvage.</text>
</comment>
<comment type="catalytic activity">
    <reaction evidence="1">
        <text>thiamine + ATP = thiamine phosphate + ADP + H(+)</text>
        <dbReference type="Rhea" id="RHEA:12012"/>
        <dbReference type="ChEBI" id="CHEBI:15378"/>
        <dbReference type="ChEBI" id="CHEBI:18385"/>
        <dbReference type="ChEBI" id="CHEBI:30616"/>
        <dbReference type="ChEBI" id="CHEBI:37575"/>
        <dbReference type="ChEBI" id="CHEBI:456216"/>
        <dbReference type="EC" id="2.7.1.89"/>
    </reaction>
    <physiologicalReaction direction="left-to-right" evidence="1">
        <dbReference type="Rhea" id="RHEA:12013"/>
    </physiologicalReaction>
</comment>
<comment type="pathway">
    <text evidence="1">Cofactor biosynthesis; thiamine diphosphate biosynthesis; thiamine phosphate from thiamine: step 1/1.</text>
</comment>
<comment type="similarity">
    <text evidence="1">Belongs to the thiamine kinase family.</text>
</comment>
<gene>
    <name evidence="1" type="primary">thiK</name>
    <name type="ordered locus">ECP_1098</name>
</gene>
<keyword id="KW-0067">ATP-binding</keyword>
<keyword id="KW-0418">Kinase</keyword>
<keyword id="KW-0547">Nucleotide-binding</keyword>
<keyword id="KW-0808">Transferase</keyword>
<accession>Q0TIW8</accession>